<reference key="1">
    <citation type="journal article" date="1992" name="J. Biol. Chem.">
        <title>A binding protein-dependent transport system in Streptococcus mutans responsible for multiple sugar metabolism.</title>
        <authorList>
            <person name="Russell R.R.B."/>
            <person name="Aduse-Opoku J."/>
            <person name="Sutcliffe I.C."/>
            <person name="Tao L."/>
            <person name="Ferretti J.J."/>
        </authorList>
    </citation>
    <scope>NUCLEOTIDE SEQUENCE [GENOMIC DNA]</scope>
    <source>
        <strain>Ingbritt</strain>
    </source>
</reference>
<reference key="2">
    <citation type="journal article" date="2002" name="Proc. Natl. Acad. Sci. U.S.A.">
        <title>Genome sequence of Streptococcus mutans UA159, a cariogenic dental pathogen.</title>
        <authorList>
            <person name="Ajdic D.J."/>
            <person name="McShan W.M."/>
            <person name="McLaughlin R.E."/>
            <person name="Savic G."/>
            <person name="Chang J."/>
            <person name="Carson M.B."/>
            <person name="Primeaux C."/>
            <person name="Tian R."/>
            <person name="Kenton S."/>
            <person name="Jia H.G."/>
            <person name="Lin S.P."/>
            <person name="Qian Y."/>
            <person name="Li S."/>
            <person name="Zhu H."/>
            <person name="Najar F.Z."/>
            <person name="Lai H."/>
            <person name="White J."/>
            <person name="Roe B.A."/>
            <person name="Ferretti J.J."/>
        </authorList>
    </citation>
    <scope>NUCLEOTIDE SEQUENCE [LARGE SCALE GENOMIC DNA]</scope>
    <source>
        <strain>ATCC 700610 / UA159</strain>
    </source>
</reference>
<proteinExistence type="inferred from homology"/>
<feature type="chain" id="PRO_0000060118" description="Multiple sugar-binding transport system permease protein MsmG">
    <location>
        <begin position="1"/>
        <end position="277"/>
    </location>
</feature>
<feature type="transmembrane region" description="Helical" evidence="1">
    <location>
        <begin position="13"/>
        <end position="33"/>
    </location>
</feature>
<feature type="transmembrane region" description="Helical" evidence="1">
    <location>
        <begin position="74"/>
        <end position="94"/>
    </location>
</feature>
<feature type="transmembrane region" description="Helical" evidence="1">
    <location>
        <begin position="110"/>
        <end position="130"/>
    </location>
</feature>
<feature type="transmembrane region" description="Helical" evidence="1">
    <location>
        <begin position="141"/>
        <end position="161"/>
    </location>
</feature>
<feature type="transmembrane region" description="Helical" evidence="1">
    <location>
        <begin position="198"/>
        <end position="218"/>
    </location>
</feature>
<feature type="transmembrane region" description="Helical" evidence="1">
    <location>
        <begin position="243"/>
        <end position="263"/>
    </location>
</feature>
<feature type="domain" description="ABC transmembrane type-1" evidence="1">
    <location>
        <begin position="69"/>
        <end position="263"/>
    </location>
</feature>
<sequence length="277" mass="31654">MKKEEKINYFWKYVLLTVGGILILIPLMVTVFSSFKKTKDIMNHFFAFPNPITLDNYKRLLADGVGGYFWNSTVITVLSVLVVMLFIPAAAYSIARNMSRRKAFNIMYSLLILGIFVPFQVIMIPITVMMSKLGLANMWGLIILYLTYAIPQTLFLYVGYIKLSVPDSLDEAAEIDGADKLTTYRKIIFPMLKPMHATTLIINALWFWNDFMLPLLILNKDSSMWTLPLFQYNYSGQYFNDYGPSFASYIVGIITITIVYLIFQKHIIAGMSNGAVK</sequence>
<gene>
    <name type="primary">msmG</name>
    <name type="ordered locus">SMU_880</name>
</gene>
<keyword id="KW-1003">Cell membrane</keyword>
<keyword id="KW-0472">Membrane</keyword>
<keyword id="KW-1185">Reference proteome</keyword>
<keyword id="KW-0762">Sugar transport</keyword>
<keyword id="KW-0812">Transmembrane</keyword>
<keyword id="KW-1133">Transmembrane helix</keyword>
<keyword id="KW-0813">Transport</keyword>
<organism>
    <name type="scientific">Streptococcus mutans serotype c (strain ATCC 700610 / UA159)</name>
    <dbReference type="NCBI Taxonomy" id="210007"/>
    <lineage>
        <taxon>Bacteria</taxon>
        <taxon>Bacillati</taxon>
        <taxon>Bacillota</taxon>
        <taxon>Bacilli</taxon>
        <taxon>Lactobacillales</taxon>
        <taxon>Streptococcaceae</taxon>
        <taxon>Streptococcus</taxon>
    </lineage>
</organism>
<comment type="function">
    <text>Involved in a binding protein-dependent transport system responsible for the uptake of melibiose, raffinose and isomaltotriose.</text>
</comment>
<comment type="subcellular location">
    <subcellularLocation>
        <location evidence="2">Cell membrane</location>
        <topology evidence="1">Multi-pass membrane protein</topology>
    </subcellularLocation>
</comment>
<comment type="similarity">
    <text evidence="2">Belongs to the binding-protein-dependent transport system permease family. MalFG subfamily.</text>
</comment>
<dbReference type="EMBL" id="M77351">
    <property type="protein sequence ID" value="AAA26936.1"/>
    <property type="molecule type" value="Genomic_DNA"/>
</dbReference>
<dbReference type="EMBL" id="AE014133">
    <property type="protein sequence ID" value="AAN58595.1"/>
    <property type="molecule type" value="Genomic_DNA"/>
</dbReference>
<dbReference type="PIR" id="B27626">
    <property type="entry name" value="B27626"/>
</dbReference>
<dbReference type="PIR" id="D42400">
    <property type="entry name" value="D42400"/>
</dbReference>
<dbReference type="RefSeq" id="NP_721289.1">
    <property type="nucleotide sequence ID" value="NC_004350.2"/>
</dbReference>
<dbReference type="RefSeq" id="WP_002262874.1">
    <property type="nucleotide sequence ID" value="NC_004350.2"/>
</dbReference>
<dbReference type="SMR" id="Q00751"/>
<dbReference type="STRING" id="210007.SMU_880"/>
<dbReference type="TCDB" id="3.A.1.1.28">
    <property type="family name" value="the atp-binding cassette (abc) superfamily"/>
</dbReference>
<dbReference type="KEGG" id="smu:SMU_880"/>
<dbReference type="PATRIC" id="fig|210007.7.peg.786"/>
<dbReference type="eggNOG" id="COG0395">
    <property type="taxonomic scope" value="Bacteria"/>
</dbReference>
<dbReference type="HOGENOM" id="CLU_016047_1_2_9"/>
<dbReference type="OrthoDB" id="9794684at2"/>
<dbReference type="PhylomeDB" id="Q00751"/>
<dbReference type="Proteomes" id="UP000002512">
    <property type="component" value="Chromosome"/>
</dbReference>
<dbReference type="GO" id="GO:0005886">
    <property type="term" value="C:plasma membrane"/>
    <property type="evidence" value="ECO:0007669"/>
    <property type="project" value="UniProtKB-SubCell"/>
</dbReference>
<dbReference type="GO" id="GO:0055085">
    <property type="term" value="P:transmembrane transport"/>
    <property type="evidence" value="ECO:0007669"/>
    <property type="project" value="InterPro"/>
</dbReference>
<dbReference type="CDD" id="cd06261">
    <property type="entry name" value="TM_PBP2"/>
    <property type="match status" value="1"/>
</dbReference>
<dbReference type="Gene3D" id="1.10.3720.10">
    <property type="entry name" value="MetI-like"/>
    <property type="match status" value="1"/>
</dbReference>
<dbReference type="InterPro" id="IPR050901">
    <property type="entry name" value="BP-dep_ABC_trans_perm"/>
</dbReference>
<dbReference type="InterPro" id="IPR000515">
    <property type="entry name" value="MetI-like"/>
</dbReference>
<dbReference type="InterPro" id="IPR035906">
    <property type="entry name" value="MetI-like_sf"/>
</dbReference>
<dbReference type="PANTHER" id="PTHR32243:SF24">
    <property type="entry name" value="DIACETYLCHITOBIOSE UPTAKE SYSTEM PERMEASE PROTEIN NGCG"/>
    <property type="match status" value="1"/>
</dbReference>
<dbReference type="PANTHER" id="PTHR32243">
    <property type="entry name" value="MALTOSE TRANSPORT SYSTEM PERMEASE-RELATED"/>
    <property type="match status" value="1"/>
</dbReference>
<dbReference type="Pfam" id="PF00528">
    <property type="entry name" value="BPD_transp_1"/>
    <property type="match status" value="1"/>
</dbReference>
<dbReference type="SUPFAM" id="SSF161098">
    <property type="entry name" value="MetI-like"/>
    <property type="match status" value="1"/>
</dbReference>
<dbReference type="PROSITE" id="PS50928">
    <property type="entry name" value="ABC_TM1"/>
    <property type="match status" value="1"/>
</dbReference>
<accession>Q00751</accession>
<name>MSMG_STRMU</name>
<evidence type="ECO:0000255" key="1">
    <source>
        <dbReference type="PROSITE-ProRule" id="PRU00441"/>
    </source>
</evidence>
<evidence type="ECO:0000305" key="2"/>
<protein>
    <recommendedName>
        <fullName>Multiple sugar-binding transport system permease protein MsmG</fullName>
    </recommendedName>
</protein>